<proteinExistence type="evidence at protein level"/>
<reference key="1">
    <citation type="journal article" date="1990" name="Oncogene">
        <title>Characterization of human and mouse c-fes cDNA clones and identification of the 5' end of the gene.</title>
        <authorList>
            <person name="Alcalay M."/>
            <person name="Antolini F."/>
            <person name="van de Ven W.J.M."/>
            <person name="Lanfrancone L."/>
            <person name="Grignani F."/>
            <person name="Pelicci P.G."/>
        </authorList>
    </citation>
    <scope>NUCLEOTIDE SEQUENCE [MRNA] (ISOFORM 1)</scope>
</reference>
<reference key="2">
    <citation type="journal article" date="1985" name="EMBO J.">
        <title>The structure of the human c-fes/fps proto-oncogene.</title>
        <authorList>
            <person name="Roebroek A.J.M."/>
            <person name="Schalken J.A."/>
            <person name="Verbeek J.S."/>
            <person name="van den Ouweland A.M.W."/>
            <person name="Onnekink C."/>
            <person name="Bloemers H.P.J."/>
            <person name="van de Ven W.J.M."/>
        </authorList>
    </citation>
    <scope>NUCLEOTIDE SEQUENCE [GENOMIC DNA] (ISOFORM 1)</scope>
</reference>
<reference key="3">
    <citation type="submission" date="2003-12" db="EMBL/GenBank/DDBJ databases">
        <authorList>
            <person name="Lefebvre J.-C."/>
        </authorList>
    </citation>
    <scope>NUCLEOTIDE SEQUENCE [MRNA] (ISOFORMS 2; 3 AND 4)</scope>
</reference>
<reference key="4">
    <citation type="journal article" date="2004" name="Nat. Genet.">
        <title>Complete sequencing and characterization of 21,243 full-length human cDNAs.</title>
        <authorList>
            <person name="Ota T."/>
            <person name="Suzuki Y."/>
            <person name="Nishikawa T."/>
            <person name="Otsuki T."/>
            <person name="Sugiyama T."/>
            <person name="Irie R."/>
            <person name="Wakamatsu A."/>
            <person name="Hayashi K."/>
            <person name="Sato H."/>
            <person name="Nagai K."/>
            <person name="Kimura K."/>
            <person name="Makita H."/>
            <person name="Sekine M."/>
            <person name="Obayashi M."/>
            <person name="Nishi T."/>
            <person name="Shibahara T."/>
            <person name="Tanaka T."/>
            <person name="Ishii S."/>
            <person name="Yamamoto J."/>
            <person name="Saito K."/>
            <person name="Kawai Y."/>
            <person name="Isono Y."/>
            <person name="Nakamura Y."/>
            <person name="Nagahari K."/>
            <person name="Murakami K."/>
            <person name="Yasuda T."/>
            <person name="Iwayanagi T."/>
            <person name="Wagatsuma M."/>
            <person name="Shiratori A."/>
            <person name="Sudo H."/>
            <person name="Hosoiri T."/>
            <person name="Kaku Y."/>
            <person name="Kodaira H."/>
            <person name="Kondo H."/>
            <person name="Sugawara M."/>
            <person name="Takahashi M."/>
            <person name="Kanda K."/>
            <person name="Yokoi T."/>
            <person name="Furuya T."/>
            <person name="Kikkawa E."/>
            <person name="Omura Y."/>
            <person name="Abe K."/>
            <person name="Kamihara K."/>
            <person name="Katsuta N."/>
            <person name="Sato K."/>
            <person name="Tanikawa M."/>
            <person name="Yamazaki M."/>
            <person name="Ninomiya K."/>
            <person name="Ishibashi T."/>
            <person name="Yamashita H."/>
            <person name="Murakawa K."/>
            <person name="Fujimori K."/>
            <person name="Tanai H."/>
            <person name="Kimata M."/>
            <person name="Watanabe M."/>
            <person name="Hiraoka S."/>
            <person name="Chiba Y."/>
            <person name="Ishida S."/>
            <person name="Ono Y."/>
            <person name="Takiguchi S."/>
            <person name="Watanabe S."/>
            <person name="Yosida M."/>
            <person name="Hotuta T."/>
            <person name="Kusano J."/>
            <person name="Kanehori K."/>
            <person name="Takahashi-Fujii A."/>
            <person name="Hara H."/>
            <person name="Tanase T.-O."/>
            <person name="Nomura Y."/>
            <person name="Togiya S."/>
            <person name="Komai F."/>
            <person name="Hara R."/>
            <person name="Takeuchi K."/>
            <person name="Arita M."/>
            <person name="Imose N."/>
            <person name="Musashino K."/>
            <person name="Yuuki H."/>
            <person name="Oshima A."/>
            <person name="Sasaki N."/>
            <person name="Aotsuka S."/>
            <person name="Yoshikawa Y."/>
            <person name="Matsunawa H."/>
            <person name="Ichihara T."/>
            <person name="Shiohata N."/>
            <person name="Sano S."/>
            <person name="Moriya S."/>
            <person name="Momiyama H."/>
            <person name="Satoh N."/>
            <person name="Takami S."/>
            <person name="Terashima Y."/>
            <person name="Suzuki O."/>
            <person name="Nakagawa S."/>
            <person name="Senoh A."/>
            <person name="Mizoguchi H."/>
            <person name="Goto Y."/>
            <person name="Shimizu F."/>
            <person name="Wakebe H."/>
            <person name="Hishigaki H."/>
            <person name="Watanabe T."/>
            <person name="Sugiyama A."/>
            <person name="Takemoto M."/>
            <person name="Kawakami B."/>
            <person name="Yamazaki M."/>
            <person name="Watanabe K."/>
            <person name="Kumagai A."/>
            <person name="Itakura S."/>
            <person name="Fukuzumi Y."/>
            <person name="Fujimori Y."/>
            <person name="Komiyama M."/>
            <person name="Tashiro H."/>
            <person name="Tanigami A."/>
            <person name="Fujiwara T."/>
            <person name="Ono T."/>
            <person name="Yamada K."/>
            <person name="Fujii Y."/>
            <person name="Ozaki K."/>
            <person name="Hirao M."/>
            <person name="Ohmori Y."/>
            <person name="Kawabata A."/>
            <person name="Hikiji T."/>
            <person name="Kobatake N."/>
            <person name="Inagaki H."/>
            <person name="Ikema Y."/>
            <person name="Okamoto S."/>
            <person name="Okitani R."/>
            <person name="Kawakami T."/>
            <person name="Noguchi S."/>
            <person name="Itoh T."/>
            <person name="Shigeta K."/>
            <person name="Senba T."/>
            <person name="Matsumura K."/>
            <person name="Nakajima Y."/>
            <person name="Mizuno T."/>
            <person name="Morinaga M."/>
            <person name="Sasaki M."/>
            <person name="Togashi T."/>
            <person name="Oyama M."/>
            <person name="Hata H."/>
            <person name="Watanabe M."/>
            <person name="Komatsu T."/>
            <person name="Mizushima-Sugano J."/>
            <person name="Satoh T."/>
            <person name="Shirai Y."/>
            <person name="Takahashi Y."/>
            <person name="Nakagawa K."/>
            <person name="Okumura K."/>
            <person name="Nagase T."/>
            <person name="Nomura N."/>
            <person name="Kikuchi H."/>
            <person name="Masuho Y."/>
            <person name="Yamashita R."/>
            <person name="Nakai K."/>
            <person name="Yada T."/>
            <person name="Nakamura Y."/>
            <person name="Ohara O."/>
            <person name="Isogai T."/>
            <person name="Sugano S."/>
        </authorList>
    </citation>
    <scope>NUCLEOTIDE SEQUENCE [LARGE SCALE MRNA] (ISOFORMS 1 AND 2)</scope>
    <source>
        <tissue>Tongue</tissue>
    </source>
</reference>
<reference key="5">
    <citation type="journal article" date="2006" name="Nature">
        <title>Analysis of the DNA sequence and duplication history of human chromosome 15.</title>
        <authorList>
            <person name="Zody M.C."/>
            <person name="Garber M."/>
            <person name="Sharpe T."/>
            <person name="Young S.K."/>
            <person name="Rowen L."/>
            <person name="O'Neill K."/>
            <person name="Whittaker C.A."/>
            <person name="Kamal M."/>
            <person name="Chang J.L."/>
            <person name="Cuomo C.A."/>
            <person name="Dewar K."/>
            <person name="FitzGerald M.G."/>
            <person name="Kodira C.D."/>
            <person name="Madan A."/>
            <person name="Qin S."/>
            <person name="Yang X."/>
            <person name="Abbasi N."/>
            <person name="Abouelleil A."/>
            <person name="Arachchi H.M."/>
            <person name="Baradarani L."/>
            <person name="Birditt B."/>
            <person name="Bloom S."/>
            <person name="Bloom T."/>
            <person name="Borowsky M.L."/>
            <person name="Burke J."/>
            <person name="Butler J."/>
            <person name="Cook A."/>
            <person name="DeArellano K."/>
            <person name="DeCaprio D."/>
            <person name="Dorris L. III"/>
            <person name="Dors M."/>
            <person name="Eichler E.E."/>
            <person name="Engels R."/>
            <person name="Fahey J."/>
            <person name="Fleetwood P."/>
            <person name="Friedman C."/>
            <person name="Gearin G."/>
            <person name="Hall J.L."/>
            <person name="Hensley G."/>
            <person name="Johnson E."/>
            <person name="Jones C."/>
            <person name="Kamat A."/>
            <person name="Kaur A."/>
            <person name="Locke D.P."/>
            <person name="Madan A."/>
            <person name="Munson G."/>
            <person name="Jaffe D.B."/>
            <person name="Lui A."/>
            <person name="Macdonald P."/>
            <person name="Mauceli E."/>
            <person name="Naylor J.W."/>
            <person name="Nesbitt R."/>
            <person name="Nicol R."/>
            <person name="O'Leary S.B."/>
            <person name="Ratcliffe A."/>
            <person name="Rounsley S."/>
            <person name="She X."/>
            <person name="Sneddon K.M.B."/>
            <person name="Stewart S."/>
            <person name="Sougnez C."/>
            <person name="Stone S.M."/>
            <person name="Topham K."/>
            <person name="Vincent D."/>
            <person name="Wang S."/>
            <person name="Zimmer A.R."/>
            <person name="Birren B.W."/>
            <person name="Hood L."/>
            <person name="Lander E.S."/>
            <person name="Nusbaum C."/>
        </authorList>
    </citation>
    <scope>NUCLEOTIDE SEQUENCE [LARGE SCALE GENOMIC DNA]</scope>
</reference>
<reference key="6">
    <citation type="submission" date="2005-07" db="EMBL/GenBank/DDBJ databases">
        <authorList>
            <person name="Mural R.J."/>
            <person name="Istrail S."/>
            <person name="Sutton G.G."/>
            <person name="Florea L."/>
            <person name="Halpern A.L."/>
            <person name="Mobarry C.M."/>
            <person name="Lippert R."/>
            <person name="Walenz B."/>
            <person name="Shatkay H."/>
            <person name="Dew I."/>
            <person name="Miller J.R."/>
            <person name="Flanigan M.J."/>
            <person name="Edwards N.J."/>
            <person name="Bolanos R."/>
            <person name="Fasulo D."/>
            <person name="Halldorsson B.V."/>
            <person name="Hannenhalli S."/>
            <person name="Turner R."/>
            <person name="Yooseph S."/>
            <person name="Lu F."/>
            <person name="Nusskern D.R."/>
            <person name="Shue B.C."/>
            <person name="Zheng X.H."/>
            <person name="Zhong F."/>
            <person name="Delcher A.L."/>
            <person name="Huson D.H."/>
            <person name="Kravitz S.A."/>
            <person name="Mouchard L."/>
            <person name="Reinert K."/>
            <person name="Remington K.A."/>
            <person name="Clark A.G."/>
            <person name="Waterman M.S."/>
            <person name="Eichler E.E."/>
            <person name="Adams M.D."/>
            <person name="Hunkapiller M.W."/>
            <person name="Myers E.W."/>
            <person name="Venter J.C."/>
        </authorList>
    </citation>
    <scope>NUCLEOTIDE SEQUENCE [LARGE SCALE GENOMIC DNA]</scope>
</reference>
<reference key="7">
    <citation type="journal article" date="2004" name="Genome Res.">
        <title>The status, quality, and expansion of the NIH full-length cDNA project: the Mammalian Gene Collection (MGC).</title>
        <authorList>
            <consortium name="The MGC Project Team"/>
        </authorList>
    </citation>
    <scope>NUCLEOTIDE SEQUENCE [LARGE SCALE MRNA] (ISOFORM 1)</scope>
    <source>
        <tissue>Brain</tissue>
    </source>
</reference>
<reference key="8">
    <citation type="journal article" date="1989" name="J. Biol. Chem.">
        <title>K562 leukemia cells transfected with the human c-fes gene acquire the ability to undergo myeloid differentiation.</title>
        <authorList>
            <person name="Yu G."/>
            <person name="Smithgall T.E."/>
            <person name="Glazer R.I."/>
        </authorList>
    </citation>
    <scope>FUNCTION IN CELL DIFFERENTIATION AND AS TUMOR SUPPRESSOR</scope>
    <scope>CATALYTIC ACTIVITY</scope>
</reference>
<reference key="9">
    <citation type="journal article" date="1993" name="Oncogene">
        <title>Regulation of the human c-fes protein tyrosine kinase (p93c-fes) by its src homology 2 domain and major autophosphorylation site (Tyr-713).</title>
        <authorList>
            <person name="Hjermstad S.J."/>
            <person name="Peters K.L."/>
            <person name="Briggs S.D."/>
            <person name="Glazer R.I."/>
            <person name="Smithgall T.E."/>
        </authorList>
    </citation>
    <scope>PHOSPHORYLATION AT TYR-713</scope>
    <scope>CATALYTIC ACTIVITY</scope>
    <scope>MUTAGENESIS OF TYR-713</scope>
</reference>
<reference key="10">
    <citation type="journal article" date="1996" name="J. Biol. Chem.">
        <title>Co-expression with BCR induces activation of the FES tyrosine kinase and phosphorylation of specific N-terminal BCR tyrosine residues.</title>
        <authorList>
            <person name="Li J."/>
            <person name="Smithgall T.E."/>
        </authorList>
    </citation>
    <scope>FUNCTION IN PHOSPHORYLATION OF BCR</scope>
    <scope>AUTOPHOSPHORYLATION</scope>
    <scope>ACTIVITY REGULATION</scope>
</reference>
<reference key="11">
    <citation type="journal article" date="2001" name="Exp. Cell Res.">
        <title>Subcellular localization analysis of the closely related Fps/Fes and Fer protein-tyrosine kinases suggests a distinct role for Fps/Fes in vesicular trafficking.</title>
        <authorList>
            <person name="Zirngibl R."/>
            <person name="Schulze D."/>
            <person name="Mirski S.E."/>
            <person name="Cole S.P."/>
            <person name="Greer P.A."/>
        </authorList>
    </citation>
    <scope>SUBCELLULAR LOCATION</scope>
</reference>
<reference key="12">
    <citation type="journal article" date="2001" name="Mol. Cell. Biol.">
        <title>A point mutation in the N-terminal coiled-coil domain releases c-Fes tyrosine kinase activity and survival signaling in myeloid leukemia cells.</title>
        <authorList>
            <person name="Cheng H.Y."/>
            <person name="Schiavone A.P."/>
            <person name="Smithgall T.E."/>
        </authorList>
    </citation>
    <scope>FUNCTION IN CELL PROLIFERATION AND CELL SPREADING</scope>
    <scope>CATALYTIC ACTIVITY</scope>
    <scope>AUTOPHOSPHORYLATION</scope>
    <scope>SUBUNIT</scope>
    <scope>DOMAIN</scope>
    <scope>MUTAGENESIS OF LEU-145 AND LEU-334</scope>
</reference>
<reference key="13">
    <citation type="journal article" date="2002" name="Nat. Rev. Mol. Cell Biol.">
        <title>Closing in on the biological functions of Fps/Fes and Fer.</title>
        <authorList>
            <person name="Greer P."/>
        </authorList>
    </citation>
    <scope>REVIEW</scope>
</reference>
<reference key="14">
    <citation type="journal article" date="2004" name="Exp. Cell Res.">
        <title>The c-Fes tyrosine kinase cooperates with the breakpoint cluster region protein (Bcr) to induce neurite extension in a Rac- and Cdc42-dependent manner.</title>
        <authorList>
            <person name="Laurent C.E."/>
            <person name="Smithgall T.E."/>
        </authorList>
    </citation>
    <scope>FUNCTION IN REORGANIZATION OF THE ACTIN CYTOSKELETON AND CELL DIFFERENTIATION</scope>
    <scope>INTERACTION WITH BCR</scope>
</reference>
<reference key="15">
    <citation type="journal article" date="2004" name="Mol. Cell. Biol.">
        <title>The human c-Fes tyrosine kinase binds tubulin and microtubules through separate domains and promotes microtubule assembly.</title>
        <authorList>
            <person name="Laurent C.E."/>
            <person name="Delfino F.J."/>
            <person name="Cheng H.Y."/>
            <person name="Smithgall T.E."/>
        </authorList>
    </citation>
    <scope>FUNCTION</scope>
    <scope>CATALYTIC ACTIVITY</scope>
    <scope>INTERACTION WITH TUBULIN AND MICROTUBULES</scope>
    <scope>SUBCELLULAR LOCATION</scope>
    <scope>PHOSPHORYLATION AT TYR-713</scope>
    <scope>PHOSPHORYLATION BY HCK</scope>
    <scope>MUTAGENESIS OF LEU-145; ARG-483 AND LYS-590</scope>
</reference>
<reference key="16">
    <citation type="journal article" date="2005" name="Cancer Res.">
        <title>An identity crisis for fps/fes: oncogene or tumor suppressor?</title>
        <authorList>
            <person name="Sangrar W."/>
            <person name="Zirgnibl R.A."/>
            <person name="Gao Y."/>
            <person name="Muller W.J."/>
            <person name="Jia Z."/>
            <person name="Greer P.A."/>
        </authorList>
    </citation>
    <scope>CATALYTIC ACTIVITY</scope>
    <scope>AUTOPHOSPHORYLATION</scope>
    <scope>MUTAGENESIS OF MET-704; ARG-706; VAL-743 AND SER-759</scope>
</reference>
<reference key="17">
    <citation type="journal article" date="2005" name="DNA Cell Biol.">
        <title>Expression of c-Fes protein isoforms correlates with differentiation in myeloid leukemias.</title>
        <authorList>
            <person name="Carlson A."/>
            <person name="Berkowitz J.M."/>
            <person name="Browning D."/>
            <person name="Slamon D.J."/>
            <person name="Gasson J.C."/>
            <person name="Yates K.E."/>
        </authorList>
    </citation>
    <scope>ALTERNATIVE SPLICING</scope>
</reference>
<reference key="18">
    <citation type="journal article" date="2006" name="Biochem. J.">
        <title>The KRAB-associated co-repressor KAP-1 is a coiled-coil binding partner, substrate and activator of the c-Fes protein tyrosine kinase.</title>
        <authorList>
            <person name="Delfino F.J."/>
            <person name="Shaffer J.M."/>
            <person name="Smithgall T.E."/>
        </authorList>
    </citation>
    <scope>INTERACTION WITH TRIM28</scope>
</reference>
<reference key="19">
    <citation type="journal article" date="2006" name="J. Biol. Chem.">
        <title>A growth-suppressive function for the c-fes protein-tyrosine kinase in colorectal cancer.</title>
        <authorList>
            <person name="Delfino F.J."/>
            <person name="Stevenson H."/>
            <person name="Smithgall T.E."/>
        </authorList>
    </citation>
    <scope>FUNCTION IN STAT3 PHOSPHORYLATION</scope>
    <scope>ROLE AS PUTATIVE TUMOR SUPPRESSOR IN COLON CANCER</scope>
    <scope>MUTAGENESIS OF MET-704; ARG-706; VAL-743 AND SER-759</scope>
    <scope>SUBCELLULAR LOCATION</scope>
    <scope>TISSUE SPECIFICITY</scope>
</reference>
<reference key="20">
    <citation type="journal article" date="2007" name="Blood">
        <title>The tyrosine kinase FES is an essential effector of KITD816V proliferation signal.</title>
        <authorList>
            <person name="Voisset E."/>
            <person name="Lopez S."/>
            <person name="Dubreuil P."/>
            <person name="De Sepulveda P."/>
        </authorList>
    </citation>
    <scope>FUNCTION IN KIT SIGNALING</scope>
    <scope>POSSIBLE ROLE IN CANCER CELL PROLIFERATION</scope>
</reference>
<reference key="21">
    <citation type="journal article" date="2008" name="EMBO J.">
        <title>Spatial recruitment and activation of the Fes kinase by ezrin promotes HGF-induced cell scattering.</title>
        <authorList>
            <person name="Naba A."/>
            <person name="Reverdy C."/>
            <person name="Louvard D."/>
            <person name="Arpin M."/>
        </authorList>
    </citation>
    <scope>FUNCTION IN CYTOSKELETON REORGANIZATION</scope>
    <scope>INTERACTION WITH EZR</scope>
    <scope>PHOSPHORYLATION AT TYR-713</scope>
    <scope>SUBCELLULAR LOCATION</scope>
</reference>
<reference key="22">
    <citation type="journal article" date="2009" name="Biochemistry">
        <title>Bimolecular fluorescence complementation demonstrates that the c-Fes protein-tyrosine kinase forms constitutive oligomers in living cells.</title>
        <authorList>
            <person name="Shaffer J.M."/>
            <person name="Hellwig S."/>
            <person name="Smithgall T.E."/>
        </authorList>
    </citation>
    <scope>SUBUNIT</scope>
    <scope>SUBCELLULAR LOCATION</scope>
    <scope>PHOSPHORYLATION AT TYR-713</scope>
    <scope>PHOSPHORYLATION BY HCK</scope>
    <scope>DOMAIN</scope>
</reference>
<reference key="23">
    <citation type="journal article" date="2009" name="Genes Chromosomes Cancer">
        <title>Promoter methylation blocks FES protein-tyrosine kinase gene expression in colorectal cancer.</title>
        <authorList>
            <person name="Shaffer J.M."/>
            <person name="Smithgall T.E."/>
        </authorList>
    </citation>
    <scope>FUNCTION</scope>
    <scope>TISSUE SPECIFICITY</scope>
    <scope>ROLE AS PUTATIVE TUMOR SUPPRESSOR IN COLON CANCER</scope>
</reference>
<reference key="24">
    <citation type="journal article" date="2009" name="Int. J. Oncol.">
        <title>Downregulation of the c-Fes protein-tyrosine kinase inhibits the proliferation of human renal carcinoma cells.</title>
        <authorList>
            <person name="Kanda S."/>
            <person name="Miyata Y."/>
            <person name="Kanetake H."/>
            <person name="Smithgall T.E."/>
        </authorList>
    </citation>
    <scope>PUTATIVE ROLE IN RENAL CARCINOMA</scope>
</reference>
<reference key="25">
    <citation type="journal article" date="2009" name="Mol. Cell. Biol.">
        <title>Contributions of F-BAR and SH2 domains of Fes protein tyrosine kinase for coupling to the FcepsilonRI pathway in mast cells.</title>
        <authorList>
            <person name="McPherson V.A."/>
            <person name="Everingham S."/>
            <person name="Karisch R."/>
            <person name="Smith J.A."/>
            <person name="Udell C.M."/>
            <person name="Zheng J."/>
            <person name="Jia Z."/>
            <person name="Craig A.W."/>
        </authorList>
    </citation>
    <scope>FUNCTION</scope>
    <scope>INTERACTION WITH MS4A2/FCER1B AND HCLS1/HS1</scope>
    <scope>SUBCELLULAR LOCATION</scope>
    <scope>PHOSPHORYLATION</scope>
    <scope>INTERACTION WITH PHOSPHOINOSITIDE-CONTAINING MEMBRANES</scope>
    <scope>MUTAGENESIS OF 113-ARG-LYS-114</scope>
</reference>
<reference key="26">
    <citation type="journal article" date="2009" name="Mol. Cell. Proteomics">
        <title>Large-scale proteomics analysis of the human kinome.</title>
        <authorList>
            <person name="Oppermann F.S."/>
            <person name="Gnad F."/>
            <person name="Olsen J.V."/>
            <person name="Hornberger R."/>
            <person name="Greff Z."/>
            <person name="Keri G."/>
            <person name="Mann M."/>
            <person name="Daub H."/>
        </authorList>
    </citation>
    <scope>PHOSPHORYLATION [LARGE SCALE ANALYSIS] AT SER-64; SER-67; TYR-261; TYR-713 AND SER-716</scope>
    <scope>IDENTIFICATION BY MASS SPECTROMETRY [LARGE SCALE ANALYSIS]</scope>
</reference>
<reference key="27">
    <citation type="journal article" date="2010" name="Leukemia">
        <title>FES kinases are required for oncogenic FLT3 signaling.</title>
        <authorList>
            <person name="Voisset E."/>
            <person name="Lopez S."/>
            <person name="Chaix A."/>
            <person name="Georges C."/>
            <person name="Hanssens K."/>
            <person name="Prebet T."/>
            <person name="Dubreuil P."/>
            <person name="De Sepulveda P."/>
        </authorList>
    </citation>
    <scope>FUNCTION</scope>
    <scope>PHOSPHORYLATION AT THR-421</scope>
    <scope>INTERACTION WITH FLT3</scope>
</reference>
<reference key="28">
    <citation type="journal article" date="2011" name="Front. Biosci.">
        <title>Structure and regulation of the c-Fes protein-tyrosine kinase.</title>
        <authorList>
            <person name="Hellwig S."/>
            <person name="Smithgall T.E."/>
        </authorList>
    </citation>
    <scope>REVIEW</scope>
</reference>
<reference key="29">
    <citation type="journal article" date="2012" name="Prostate">
        <title>Pathological significance and predictive value for biochemical recurrence of c-Fes expression in prostate cancer.</title>
        <authorList>
            <person name="Miyata Y."/>
            <person name="Watanabe S.I."/>
            <person name="Matsuo T."/>
            <person name="Hayashi T."/>
            <person name="Sakai H."/>
            <person name="Xuan J.W."/>
            <person name="Greer P.A."/>
            <person name="Kanda S."/>
        </authorList>
    </citation>
    <scope>POSSIBLE ROLE IN PROSTATE CANCER</scope>
</reference>
<reference key="30">
    <citation type="journal article" date="2014" name="J. Proteomics">
        <title>An enzyme assisted RP-RPLC approach for in-depth analysis of human liver phosphoproteome.</title>
        <authorList>
            <person name="Bian Y."/>
            <person name="Song C."/>
            <person name="Cheng K."/>
            <person name="Dong M."/>
            <person name="Wang F."/>
            <person name="Huang J."/>
            <person name="Sun D."/>
            <person name="Wang L."/>
            <person name="Ye M."/>
            <person name="Zou H."/>
        </authorList>
    </citation>
    <scope>PHOSPHORYLATION [LARGE SCALE ANALYSIS] AT SER-408 AND SER-411</scope>
    <scope>IDENTIFICATION BY MASS SPECTROMETRY [LARGE SCALE ANALYSIS]</scope>
    <source>
        <tissue>Liver</tissue>
    </source>
</reference>
<reference key="31">
    <citation type="journal article" date="2017" name="J. Clin. Invest.">
        <title>Comparative oncogenomics identifies tyrosine kinase FES as a tumor suppressor in melanoma.</title>
        <authorList>
            <person name="Olvedy M."/>
            <person name="Tisserand J.C."/>
            <person name="Luciani F."/>
            <person name="Boeckx B."/>
            <person name="Wouters J."/>
            <person name="Lopez S."/>
            <person name="Rambow F."/>
            <person name="Aibar S."/>
            <person name="Thienpont B."/>
            <person name="Barra J."/>
            <person name="Koehler C."/>
            <person name="Radaelli E."/>
            <person name="Tartare-Deckert S."/>
            <person name="Aerts S."/>
            <person name="Dubreuil P."/>
            <person name="van den Oord J.J."/>
            <person name="Lambrechts D."/>
            <person name="De Sepulveda P."/>
            <person name="Marine J.C."/>
        </authorList>
    </citation>
    <scope>TISSUE SPECIFICITY</scope>
    <scope>ROLE AS TUMOR SUPPRESSOR IN MELANOMA</scope>
    <scope>MUTAGENESIS OF LYS-590</scope>
</reference>
<reference key="32">
    <citation type="journal article" date="2005" name="J. Biomol. NMR">
        <title>Solution structure of the Src homology 2 domain from the human feline sarcoma oncogene Fes.</title>
        <authorList>
            <person name="Scott A."/>
            <person name="Pantoja-Uceda D."/>
            <person name="Koshiba S."/>
            <person name="Inoue M."/>
            <person name="Kigawa T."/>
            <person name="Terada T."/>
            <person name="Shirouzu M."/>
            <person name="Tanaka A."/>
            <person name="Sugano S."/>
            <person name="Yokoyama S."/>
            <person name="Guentert P."/>
        </authorList>
    </citation>
    <scope>STRUCTURE BY NMR OF 450-550</scope>
</reference>
<reference key="33">
    <citation type="journal article" date="2008" name="Cell">
        <title>Structural coupling of SH2-kinase domains links Fes and Abl substrate recognition and kinase activation.</title>
        <authorList>
            <person name="Filippakopoulos P."/>
            <person name="Kofler M."/>
            <person name="Hantschel O."/>
            <person name="Gish G.D."/>
            <person name="Grebien F."/>
            <person name="Salah E."/>
            <person name="Neudecker P."/>
            <person name="Kay L.E."/>
            <person name="Turk B.E."/>
            <person name="Superti-Furga G."/>
            <person name="Pawson T."/>
            <person name="Knapp S."/>
        </authorList>
    </citation>
    <scope>X-RAY CRYSTALLOGRAPHY (1.78 ANGSTROMS) OF 448-822 OF UNPHOSPHORYLATED APOPROTEIN AND IN COMPLEX WITH STAUROSPORINE AND A SUBSTRATE PEPTIDE</scope>
    <scope>CATALYTIC ACTIVITY</scope>
    <scope>ACTIVITY REGULATION</scope>
    <scope>PHOSPHORYLATION AT TYR-713</scope>
    <scope>NMR SPECTROSCOPY</scope>
    <scope>MUTAGENESIS OF GLY-463 AND ARG-483</scope>
</reference>
<reference key="34">
    <citation type="journal article" date="2007" name="Nature">
        <title>Patterns of somatic mutation in human cancer genomes.</title>
        <authorList>
            <person name="Greenman C."/>
            <person name="Stephens P."/>
            <person name="Smith R."/>
            <person name="Dalgliesh G.L."/>
            <person name="Hunter C."/>
            <person name="Bignell G."/>
            <person name="Davies H."/>
            <person name="Teague J."/>
            <person name="Butler A."/>
            <person name="Stevens C."/>
            <person name="Edkins S."/>
            <person name="O'Meara S."/>
            <person name="Vastrik I."/>
            <person name="Schmidt E.E."/>
            <person name="Avis T."/>
            <person name="Barthorpe S."/>
            <person name="Bhamra G."/>
            <person name="Buck G."/>
            <person name="Choudhury B."/>
            <person name="Clements J."/>
            <person name="Cole J."/>
            <person name="Dicks E."/>
            <person name="Forbes S."/>
            <person name="Gray K."/>
            <person name="Halliday K."/>
            <person name="Harrison R."/>
            <person name="Hills K."/>
            <person name="Hinton J."/>
            <person name="Jenkinson A."/>
            <person name="Jones D."/>
            <person name="Menzies A."/>
            <person name="Mironenko T."/>
            <person name="Perry J."/>
            <person name="Raine K."/>
            <person name="Richardson D."/>
            <person name="Shepherd R."/>
            <person name="Small A."/>
            <person name="Tofts C."/>
            <person name="Varian J."/>
            <person name="Webb T."/>
            <person name="West S."/>
            <person name="Widaa S."/>
            <person name="Yates A."/>
            <person name="Cahill D.P."/>
            <person name="Louis D.N."/>
            <person name="Goldstraw P."/>
            <person name="Nicholson A.G."/>
            <person name="Brasseur F."/>
            <person name="Looijenga L."/>
            <person name="Weber B.L."/>
            <person name="Chiew Y.-E."/>
            <person name="DeFazio A."/>
            <person name="Greaves M.F."/>
            <person name="Green A.R."/>
            <person name="Campbell P."/>
            <person name="Birney E."/>
            <person name="Easton D.F."/>
            <person name="Chenevix-Trench G."/>
            <person name="Tan M.-H."/>
            <person name="Khoo S.K."/>
            <person name="Teh B.T."/>
            <person name="Yuen S.T."/>
            <person name="Leung S.Y."/>
            <person name="Wooster R."/>
            <person name="Futreal P.A."/>
            <person name="Stratton M.R."/>
        </authorList>
    </citation>
    <scope>VARIANTS [LARGE SCALE ANALYSIS] CYS-85; GLN-246 AND VAL-323</scope>
</reference>
<name>FES_HUMAN</name>
<comment type="function">
    <text evidence="7 8 9 11 14 15 17 18 21 22 25">Tyrosine-protein kinase that acts downstream of cell surface receptors and plays a role in the regulation of the actin cytoskeleton, microtubule assembly, cell attachment and cell spreading. Plays a role in FCER1 (high affinity immunoglobulin epsilon receptor)-mediated signaling in mast cells. Acts down-stream of the activated FCER1 receptor and the mast/stem cell growth factor receptor KIT. Plays a role in the regulation of mast cell degranulation. Plays a role in the regulation of cell differentiation and promotes neurite outgrowth in response to NGF signaling. Plays a role in cell scattering and cell migration in response to HGF-induced activation of EZR. Phosphorylates BCR and down-regulates BCR kinase activity. Phosphorylates HCLS1/HS1, PECAM1, STAT3 and TRIM28.</text>
</comment>
<comment type="catalytic activity">
    <reaction evidence="5 7 9 10 16 22 24">
        <text>L-tyrosyl-[protein] + ATP = O-phospho-L-tyrosyl-[protein] + ADP + H(+)</text>
        <dbReference type="Rhea" id="RHEA:10596"/>
        <dbReference type="Rhea" id="RHEA-COMP:10136"/>
        <dbReference type="Rhea" id="RHEA-COMP:20101"/>
        <dbReference type="ChEBI" id="CHEBI:15378"/>
        <dbReference type="ChEBI" id="CHEBI:30616"/>
        <dbReference type="ChEBI" id="CHEBI:46858"/>
        <dbReference type="ChEBI" id="CHEBI:61978"/>
        <dbReference type="ChEBI" id="CHEBI:456216"/>
        <dbReference type="EC" id="2.7.10.2"/>
    </reaction>
</comment>
<comment type="activity regulation">
    <text evidence="16 25">Kinase activity is tightly regulated. Activated in response to signaling from a cell surface receptor. Activation probably requires binding of a substrate via the SH2 domain, plus autophosphorylation at Tyr-713. Present in an inactive form in the absence of activating stimuli.</text>
</comment>
<comment type="subunit">
    <text evidence="7 8 9 12 15 16 17 20 21">Homooligomer. Interacts with BCR. Interacts (when activated, via coiled coil domain) with TRIM28. Interacts (via SH2 domain) with phosphorylated EZR, MS4A2/FCER1B and HCLS1/HS1. Interacts with phosphorylated KIT. Interacts with FLT3. Interacts (via F-BAR domain) with soluble tubulin. Interacts (via SH2 domain) with microtubules.</text>
</comment>
<comment type="interaction">
    <interactant intactId="EBI-1055635">
        <id>P07332</id>
    </interactant>
    <interactant intactId="EBI-608057">
        <id>P10275</id>
        <label>AR</label>
    </interactant>
    <organismsDiffer>false</organismsDiffer>
    <experiments>3</experiments>
</comment>
<comment type="interaction">
    <interactant intactId="EBI-1055635">
        <id>P07332</id>
    </interactant>
    <interactant intactId="EBI-355041">
        <id>P15924</id>
        <label>DSP</label>
    </interactant>
    <organismsDiffer>false</organismsDiffer>
    <experiments>2</experiments>
</comment>
<comment type="interaction">
    <interactant intactId="EBI-1055635">
        <id>P07332</id>
    </interactant>
    <interactant intactId="EBI-1056902">
        <id>P15311</id>
        <label>EZR</label>
    </interactant>
    <organismsDiffer>false</organismsDiffer>
    <experiments>8</experiments>
</comment>
<comment type="interaction">
    <interactant intactId="EBI-1055635">
        <id>P07332</id>
    </interactant>
    <interactant intactId="EBI-517684">
        <id>Q13480</id>
        <label>GAB1</label>
    </interactant>
    <organismsDiffer>false</organismsDiffer>
    <experiments>2</experiments>
</comment>
<comment type="interaction">
    <interactant intactId="EBI-1055635">
        <id>P07332</id>
    </interactant>
    <interactant intactId="EBI-1379503">
        <id>P10721</id>
        <label>KIT</label>
    </interactant>
    <organismsDiffer>false</organismsDiffer>
    <experiments>2</experiments>
</comment>
<comment type="interaction">
    <interactant intactId="EBI-1055635">
        <id>P07332</id>
    </interactant>
    <interactant intactId="EBI-710997">
        <id>P54274</id>
        <label>TERF1</label>
    </interactant>
    <organismsDiffer>false</organismsDiffer>
    <experiments>2</experiments>
</comment>
<comment type="subcellular location">
    <subcellularLocation>
        <location>Cytoplasm</location>
        <location>Cytosol</location>
    </subcellularLocation>
    <subcellularLocation>
        <location>Cytoplasm</location>
        <location>Cytoskeleton</location>
    </subcellularLocation>
    <subcellularLocation>
        <location>Cell membrane</location>
        <topology>Peripheral membrane protein</topology>
        <orientation>Cytoplasmic side</orientation>
    </subcellularLocation>
    <subcellularLocation>
        <location>Cytoplasmic vesicle</location>
    </subcellularLocation>
    <subcellularLocation>
        <location>Golgi apparatus</location>
    </subcellularLocation>
    <subcellularLocation>
        <location>Cell junction</location>
        <location>Focal adhesion</location>
    </subcellularLocation>
    <text>Distributed throughout the cytosol when the kinase is not activated. Association with microtubules requires activation of the kinase activity. Shuttles between focal adhesions and cell-cell contacts in epithelial cells. Recruited to the lateral cell membrane in polarized epithelial cells by interaction with phosphorylated EZR. Detected at tubular membrane structures in the cytoplasm and at the cell periphery.</text>
</comment>
<comment type="alternative products">
    <event type="alternative splicing"/>
    <isoform>
        <id>P07332-1</id>
        <name>1</name>
        <sequence type="displayed"/>
    </isoform>
    <isoform>
        <id>P07332-2</id>
        <name>2</name>
        <name>Variant 1</name>
        <sequence type="described" ref="VSP_041748 VSP_041749"/>
    </isoform>
    <isoform>
        <id>P07332-3</id>
        <name>3</name>
        <name>Variant 3</name>
        <sequence type="described" ref="VSP_041748"/>
    </isoform>
    <isoform>
        <id>P07332-4</id>
        <name>4</name>
        <name>Variant 4</name>
        <sequence type="described" ref="VSP_041749"/>
    </isoform>
</comment>
<comment type="tissue specificity">
    <text evidence="11 18 23">Widely expressed. Detected in adult colon epithelium (at protein level) (PubMed:16455651, PubMed:19051325). Expressed in melanocytes (at protein level) (PubMed:28463229).</text>
</comment>
<comment type="domain">
    <text>The coiled coil domains are important for regulating the kinase activity. They mediate homooligomerization and probably also interaction with other proteins.</text>
</comment>
<comment type="domain">
    <text>The N-terminal region including the first coiled coil domain mediates interaction with phosphoinositide-containing membranes.</text>
</comment>
<comment type="PTM">
    <text evidence="9 15 16 17 20 21 24">Autophosphorylated on Tyr-713. Phosphorylated by LYN in response to FCER1 activation. Phosphorylated by HCK.</text>
</comment>
<comment type="disease">
    <text evidence="11 19 21 22 23">Has been shown to act as proto-oncogene in some types of cancer, possibly due to abnormal activation of the kinase. Has been shown to act as tumor suppressor in other types of cancer. Expressed and present as activated kinase in a subset of acute myeloid leukemia patients; promotes survival of leukemia cells (PubMed:20111072). Expression is absent in K562 leukemia cells; ectopic expression of FSP/FES restores myeloid differentiation (PubMed:2656706). May function as tumor suppressor in colorectal cancer; expression is reduced or absent in samples from some colon cancer patients (PubMed:16455651). May function as tumor suppressor in melanoma by preventing melanoma cell proliferation; expression is reduced or absent in samples from some melanoma patients (PubMed:28463229). Ectopic expression of FSP/FES suppresses anchorage-independent growth in colon cancer cell lines (PubMed:16455651). Up-regulated in prostate cancer, and might be a predictor of recurrence after radical surgery (PubMed:16455651). May promote growth of renal carcinoma cells (PubMed:19082481).</text>
</comment>
<comment type="miscellaneous">
    <text evidence="29">Cellular homolog of retroviral oncogenes. In contrast to the viral oncoproteins, the kinase activity of cellular FSP/FES is tightly regulated, and the kinase is inactive in normal cells in the absence of activating stimuli (PubMed:15485904).</text>
</comment>
<comment type="similarity">
    <text evidence="2">Belongs to the protein kinase superfamily. Tyr protein kinase family. Fes/fps subfamily.</text>
</comment>
<gene>
    <name type="primary">FES</name>
    <name type="synonym">FPS</name>
</gene>
<protein>
    <recommendedName>
        <fullName>Tyrosine-protein kinase Fes/Fps</fullName>
        <ecNumber>2.7.10.2</ecNumber>
    </recommendedName>
    <alternativeName>
        <fullName>Feline sarcoma/Fujinami avian sarcoma oncogene homolog</fullName>
    </alternativeName>
    <alternativeName>
        <fullName>Proto-oncogene c-Fes</fullName>
    </alternativeName>
    <alternativeName>
        <fullName>Proto-oncogene c-Fps</fullName>
    </alternativeName>
    <alternativeName>
        <fullName>p93c-fes</fullName>
    </alternativeName>
</protein>
<organism>
    <name type="scientific">Homo sapiens</name>
    <name type="common">Human</name>
    <dbReference type="NCBI Taxonomy" id="9606"/>
    <lineage>
        <taxon>Eukaryota</taxon>
        <taxon>Metazoa</taxon>
        <taxon>Chordata</taxon>
        <taxon>Craniata</taxon>
        <taxon>Vertebrata</taxon>
        <taxon>Euteleostomi</taxon>
        <taxon>Mammalia</taxon>
        <taxon>Eutheria</taxon>
        <taxon>Euarchontoglires</taxon>
        <taxon>Primates</taxon>
        <taxon>Haplorrhini</taxon>
        <taxon>Catarrhini</taxon>
        <taxon>Hominidae</taxon>
        <taxon>Homo</taxon>
    </lineage>
</organism>
<evidence type="ECO:0000255" key="1"/>
<evidence type="ECO:0000255" key="2">
    <source>
        <dbReference type="PROSITE-ProRule" id="PRU00159"/>
    </source>
</evidence>
<evidence type="ECO:0000255" key="3">
    <source>
        <dbReference type="PROSITE-ProRule" id="PRU00191"/>
    </source>
</evidence>
<evidence type="ECO:0000255" key="4">
    <source>
        <dbReference type="PROSITE-ProRule" id="PRU01077"/>
    </source>
</evidence>
<evidence type="ECO:0000255" key="5">
    <source>
        <dbReference type="PROSITE-ProRule" id="PRU10028"/>
    </source>
</evidence>
<evidence type="ECO:0000256" key="6">
    <source>
        <dbReference type="SAM" id="MobiDB-lite"/>
    </source>
</evidence>
<evidence type="ECO:0000269" key="7">
    <source>
    </source>
</evidence>
<evidence type="ECO:0000269" key="8">
    <source>
    </source>
</evidence>
<evidence type="ECO:0000269" key="9">
    <source>
    </source>
</evidence>
<evidence type="ECO:0000269" key="10">
    <source>
    </source>
</evidence>
<evidence type="ECO:0000269" key="11">
    <source>
    </source>
</evidence>
<evidence type="ECO:0000269" key="12">
    <source>
    </source>
</evidence>
<evidence type="ECO:0000269" key="13">
    <source>
    </source>
</evidence>
<evidence type="ECO:0000269" key="14">
    <source>
    </source>
</evidence>
<evidence type="ECO:0000269" key="15">
    <source>
    </source>
</evidence>
<evidence type="ECO:0000269" key="16">
    <source>
    </source>
</evidence>
<evidence type="ECO:0000269" key="17">
    <source>
    </source>
</evidence>
<evidence type="ECO:0000269" key="18">
    <source>
    </source>
</evidence>
<evidence type="ECO:0000269" key="19">
    <source>
    </source>
</evidence>
<evidence type="ECO:0000269" key="20">
    <source>
    </source>
</evidence>
<evidence type="ECO:0000269" key="21">
    <source>
    </source>
</evidence>
<evidence type="ECO:0000269" key="22">
    <source>
    </source>
</evidence>
<evidence type="ECO:0000269" key="23">
    <source>
    </source>
</evidence>
<evidence type="ECO:0000269" key="24">
    <source>
    </source>
</evidence>
<evidence type="ECO:0000269" key="25">
    <source>
    </source>
</evidence>
<evidence type="ECO:0000303" key="26">
    <source>
    </source>
</evidence>
<evidence type="ECO:0000303" key="27">
    <source ref="3"/>
</evidence>
<evidence type="ECO:0000305" key="28"/>
<evidence type="ECO:0000305" key="29">
    <source>
    </source>
</evidence>
<evidence type="ECO:0007744" key="30">
    <source>
    </source>
</evidence>
<evidence type="ECO:0007744" key="31">
    <source>
    </source>
</evidence>
<evidence type="ECO:0007829" key="32">
    <source>
        <dbReference type="PDB" id="1WQU"/>
    </source>
</evidence>
<evidence type="ECO:0007829" key="33">
    <source>
        <dbReference type="PDB" id="3CBL"/>
    </source>
</evidence>
<evidence type="ECO:0007829" key="34">
    <source>
        <dbReference type="PDB" id="4DYL"/>
    </source>
</evidence>
<evidence type="ECO:0007829" key="35">
    <source>
        <dbReference type="PDB" id="4E93"/>
    </source>
</evidence>
<evidence type="ECO:0007829" key="36">
    <source>
        <dbReference type="PDB" id="7T1K"/>
    </source>
</evidence>
<dbReference type="EC" id="2.7.10.2"/>
<dbReference type="EMBL" id="X52192">
    <property type="protein sequence ID" value="CAA36438.1"/>
    <property type="molecule type" value="mRNA"/>
</dbReference>
<dbReference type="EMBL" id="X06292">
    <property type="protein sequence ID" value="CAA29619.1"/>
    <property type="molecule type" value="Genomic_DNA"/>
</dbReference>
<dbReference type="EMBL" id="AY513654">
    <property type="protein sequence ID" value="AAS82866.1"/>
    <property type="molecule type" value="mRNA"/>
</dbReference>
<dbReference type="EMBL" id="AY513656">
    <property type="protein sequence ID" value="AAS82868.1"/>
    <property type="molecule type" value="mRNA"/>
</dbReference>
<dbReference type="EMBL" id="AY513657">
    <property type="protein sequence ID" value="AAS82869.1"/>
    <property type="molecule type" value="mRNA"/>
</dbReference>
<dbReference type="EMBL" id="AK300595">
    <property type="protein sequence ID" value="BAG62292.1"/>
    <property type="molecule type" value="mRNA"/>
</dbReference>
<dbReference type="EMBL" id="AK312545">
    <property type="protein sequence ID" value="BAG35443.1"/>
    <property type="molecule type" value="mRNA"/>
</dbReference>
<dbReference type="EMBL" id="AC124248">
    <property type="status" value="NOT_ANNOTATED_CDS"/>
    <property type="molecule type" value="Genomic_DNA"/>
</dbReference>
<dbReference type="EMBL" id="CH471101">
    <property type="protein sequence ID" value="EAX02114.1"/>
    <property type="molecule type" value="Genomic_DNA"/>
</dbReference>
<dbReference type="EMBL" id="BC035357">
    <property type="protein sequence ID" value="AAH35357.1"/>
    <property type="molecule type" value="mRNA"/>
</dbReference>
<dbReference type="CCDS" id="CCDS10365.1">
    <molecule id="P07332-1"/>
</dbReference>
<dbReference type="CCDS" id="CCDS45349.1">
    <molecule id="P07332-4"/>
</dbReference>
<dbReference type="CCDS" id="CCDS45350.1">
    <molecule id="P07332-3"/>
</dbReference>
<dbReference type="CCDS" id="CCDS45351.1">
    <molecule id="P07332-2"/>
</dbReference>
<dbReference type="PIR" id="A24673">
    <property type="entry name" value="TVHUFF"/>
</dbReference>
<dbReference type="RefSeq" id="NP_001137255.1">
    <molecule id="P07332-3"/>
    <property type="nucleotide sequence ID" value="NM_001143783.1"/>
</dbReference>
<dbReference type="RefSeq" id="NP_001137256.1">
    <molecule id="P07332-4"/>
    <property type="nucleotide sequence ID" value="NM_001143784.1"/>
</dbReference>
<dbReference type="RefSeq" id="NP_001137257.1">
    <molecule id="P07332-2"/>
    <property type="nucleotide sequence ID" value="NM_001143785.2"/>
</dbReference>
<dbReference type="RefSeq" id="NP_001996.1">
    <molecule id="P07332-1"/>
    <property type="nucleotide sequence ID" value="NM_002005.4"/>
</dbReference>
<dbReference type="RefSeq" id="XP_005254937.1">
    <molecule id="P07332-3"/>
    <property type="nucleotide sequence ID" value="XM_005254880.2"/>
</dbReference>
<dbReference type="RefSeq" id="XP_005254939.1">
    <molecule id="P07332-4"/>
    <property type="nucleotide sequence ID" value="XM_005254882.3"/>
</dbReference>
<dbReference type="RefSeq" id="XP_016877494.1">
    <molecule id="P07332-1"/>
    <property type="nucleotide sequence ID" value="XM_017022005.2"/>
</dbReference>
<dbReference type="RefSeq" id="XP_016877495.1">
    <molecule id="P07332-3"/>
    <property type="nucleotide sequence ID" value="XM_017022006.2"/>
</dbReference>
<dbReference type="RefSeq" id="XP_016877496.1">
    <molecule id="P07332-4"/>
    <property type="nucleotide sequence ID" value="XM_017022007.2"/>
</dbReference>
<dbReference type="RefSeq" id="XP_016877497.1">
    <molecule id="P07332-2"/>
    <property type="nucleotide sequence ID" value="XM_017022008.2"/>
</dbReference>
<dbReference type="RefSeq" id="XP_016877498.1">
    <molecule id="P07332-1"/>
    <property type="nucleotide sequence ID" value="XM_017022009.3"/>
</dbReference>
<dbReference type="RefSeq" id="XP_016877499.1">
    <molecule id="P07332-3"/>
    <property type="nucleotide sequence ID" value="XM_017022010.2"/>
</dbReference>
<dbReference type="RefSeq" id="XP_047288189.1">
    <molecule id="P07332-1"/>
    <property type="nucleotide sequence ID" value="XM_047432233.1"/>
</dbReference>
<dbReference type="RefSeq" id="XP_047288190.1">
    <molecule id="P07332-3"/>
    <property type="nucleotide sequence ID" value="XM_047432234.1"/>
</dbReference>
<dbReference type="RefSeq" id="XP_047288191.1">
    <molecule id="P07332-4"/>
    <property type="nucleotide sequence ID" value="XM_047432235.1"/>
</dbReference>
<dbReference type="RefSeq" id="XP_047288193.1">
    <molecule id="P07332-2"/>
    <property type="nucleotide sequence ID" value="XM_047432237.1"/>
</dbReference>
<dbReference type="RefSeq" id="XP_054233470.1">
    <molecule id="P07332-1"/>
    <property type="nucleotide sequence ID" value="XM_054377495.1"/>
</dbReference>
<dbReference type="RefSeq" id="XP_054233471.1">
    <molecule id="P07332-3"/>
    <property type="nucleotide sequence ID" value="XM_054377496.1"/>
</dbReference>
<dbReference type="RefSeq" id="XP_054233472.1">
    <molecule id="P07332-4"/>
    <property type="nucleotide sequence ID" value="XM_054377497.1"/>
</dbReference>
<dbReference type="RefSeq" id="XP_054233473.1">
    <molecule id="P07332-2"/>
    <property type="nucleotide sequence ID" value="XM_054377498.1"/>
</dbReference>
<dbReference type="RefSeq" id="XP_054233474.1">
    <molecule id="P07332-1"/>
    <property type="nucleotide sequence ID" value="XM_054377499.1"/>
</dbReference>
<dbReference type="RefSeq" id="XP_054233475.1">
    <molecule id="P07332-1"/>
    <property type="nucleotide sequence ID" value="XM_054377500.1"/>
</dbReference>
<dbReference type="RefSeq" id="XP_054233476.1">
    <molecule id="P07332-3"/>
    <property type="nucleotide sequence ID" value="XM_054377501.1"/>
</dbReference>
<dbReference type="RefSeq" id="XP_054233477.1">
    <molecule id="P07332-3"/>
    <property type="nucleotide sequence ID" value="XM_054377502.1"/>
</dbReference>
<dbReference type="RefSeq" id="XP_054233478.1">
    <molecule id="P07332-3"/>
    <property type="nucleotide sequence ID" value="XM_054377503.1"/>
</dbReference>
<dbReference type="RefSeq" id="XP_054233479.1">
    <molecule id="P07332-4"/>
    <property type="nucleotide sequence ID" value="XM_054377504.1"/>
</dbReference>
<dbReference type="RefSeq" id="XP_054233480.1">
    <molecule id="P07332-4"/>
    <property type="nucleotide sequence ID" value="XM_054377505.1"/>
</dbReference>
<dbReference type="RefSeq" id="XP_054233482.1">
    <molecule id="P07332-2"/>
    <property type="nucleotide sequence ID" value="XM_054377507.1"/>
</dbReference>
<dbReference type="PDB" id="1WQU">
    <property type="method" value="NMR"/>
    <property type="chains" value="A=450-550"/>
</dbReference>
<dbReference type="PDB" id="2DCR">
    <property type="method" value="NMR"/>
    <property type="chains" value="A=450-550"/>
</dbReference>
<dbReference type="PDB" id="3BKB">
    <property type="method" value="X-ray"/>
    <property type="resolution" value="1.78 A"/>
    <property type="chains" value="A=448-822"/>
</dbReference>
<dbReference type="PDB" id="3CBL">
    <property type="method" value="X-ray"/>
    <property type="resolution" value="1.75 A"/>
    <property type="chains" value="A=448-822"/>
</dbReference>
<dbReference type="PDB" id="3CD3">
    <property type="method" value="X-ray"/>
    <property type="resolution" value="1.98 A"/>
    <property type="chains" value="A=448-822"/>
</dbReference>
<dbReference type="PDB" id="4DYL">
    <property type="method" value="X-ray"/>
    <property type="resolution" value="2.18 A"/>
    <property type="chains" value="A=1-405"/>
</dbReference>
<dbReference type="PDB" id="4E93">
    <property type="method" value="X-ray"/>
    <property type="resolution" value="1.84 A"/>
    <property type="chains" value="A=448-822"/>
</dbReference>
<dbReference type="PDB" id="6JMF">
    <property type="method" value="X-ray"/>
    <property type="resolution" value="2.00 A"/>
    <property type="chains" value="A=449-822"/>
</dbReference>
<dbReference type="PDB" id="7T1K">
    <property type="method" value="X-ray"/>
    <property type="resolution" value="1.25 A"/>
    <property type="chains" value="A=453-551"/>
</dbReference>
<dbReference type="PDB" id="7T1L">
    <property type="method" value="X-ray"/>
    <property type="resolution" value="1.35 A"/>
    <property type="chains" value="A/B=453-550"/>
</dbReference>
<dbReference type="PDB" id="8X2T">
    <property type="method" value="X-ray"/>
    <property type="resolution" value="2.90 A"/>
    <property type="chains" value="A=1-405"/>
</dbReference>
<dbReference type="PDB" id="8XKP">
    <property type="method" value="X-ray"/>
    <property type="resolution" value="2.05 A"/>
    <property type="chains" value="A=449-822"/>
</dbReference>
<dbReference type="PDBsum" id="1WQU"/>
<dbReference type="PDBsum" id="2DCR"/>
<dbReference type="PDBsum" id="3BKB"/>
<dbReference type="PDBsum" id="3CBL"/>
<dbReference type="PDBsum" id="3CD3"/>
<dbReference type="PDBsum" id="4DYL"/>
<dbReference type="PDBsum" id="4E93"/>
<dbReference type="PDBsum" id="6JMF"/>
<dbReference type="PDBsum" id="7T1K"/>
<dbReference type="PDBsum" id="7T1L"/>
<dbReference type="PDBsum" id="8X2T"/>
<dbReference type="PDBsum" id="8XKP"/>
<dbReference type="BMRB" id="P07332"/>
<dbReference type="SMR" id="P07332"/>
<dbReference type="BioGRID" id="108533">
    <property type="interactions" value="36"/>
</dbReference>
<dbReference type="FunCoup" id="P07332">
    <property type="interactions" value="457"/>
</dbReference>
<dbReference type="IntAct" id="P07332">
    <property type="interactions" value="36"/>
</dbReference>
<dbReference type="MINT" id="P07332"/>
<dbReference type="STRING" id="9606.ENSP00000331504"/>
<dbReference type="BindingDB" id="P07332"/>
<dbReference type="ChEMBL" id="CHEMBL5455"/>
<dbReference type="DrugBank" id="DB12010">
    <property type="generic name" value="Fostamatinib"/>
</dbReference>
<dbReference type="DrugCentral" id="P07332"/>
<dbReference type="GuidetoPHARMACOLOGY" id="2023"/>
<dbReference type="iPTMnet" id="P07332"/>
<dbReference type="PhosphoSitePlus" id="P07332"/>
<dbReference type="BioMuta" id="FES"/>
<dbReference type="DMDM" id="115502390"/>
<dbReference type="CPTAC" id="CPTAC-1778"/>
<dbReference type="jPOST" id="P07332"/>
<dbReference type="MassIVE" id="P07332"/>
<dbReference type="PaxDb" id="9606-ENSP00000331504"/>
<dbReference type="PeptideAtlas" id="P07332"/>
<dbReference type="ProteomicsDB" id="51989">
    <molecule id="P07332-1"/>
</dbReference>
<dbReference type="ProteomicsDB" id="51990">
    <molecule id="P07332-2"/>
</dbReference>
<dbReference type="ProteomicsDB" id="51991">
    <molecule id="P07332-3"/>
</dbReference>
<dbReference type="ProteomicsDB" id="51992">
    <molecule id="P07332-4"/>
</dbReference>
<dbReference type="Antibodypedia" id="734">
    <property type="antibodies" value="467 antibodies from 35 providers"/>
</dbReference>
<dbReference type="DNASU" id="2242"/>
<dbReference type="Ensembl" id="ENST00000328850.8">
    <molecule id="P07332-1"/>
    <property type="protein sequence ID" value="ENSP00000331504.3"/>
    <property type="gene ID" value="ENSG00000182511.12"/>
</dbReference>
<dbReference type="Ensembl" id="ENST00000394300.7">
    <molecule id="P07332-3"/>
    <property type="protein sequence ID" value="ENSP00000377837.3"/>
    <property type="gene ID" value="ENSG00000182511.12"/>
</dbReference>
<dbReference type="Ensembl" id="ENST00000414248.6">
    <molecule id="P07332-2"/>
    <property type="protein sequence ID" value="ENSP00000414629.2"/>
    <property type="gene ID" value="ENSG00000182511.12"/>
</dbReference>
<dbReference type="Ensembl" id="ENST00000444422.2">
    <molecule id="P07332-4"/>
    <property type="protein sequence ID" value="ENSP00000400868.2"/>
    <property type="gene ID" value="ENSG00000182511.12"/>
</dbReference>
<dbReference type="GeneID" id="2242"/>
<dbReference type="KEGG" id="hsa:2242"/>
<dbReference type="MANE-Select" id="ENST00000328850.8">
    <property type="protein sequence ID" value="ENSP00000331504.3"/>
    <property type="RefSeq nucleotide sequence ID" value="NM_002005.4"/>
    <property type="RefSeq protein sequence ID" value="NP_001996.1"/>
</dbReference>
<dbReference type="UCSC" id="uc002bpv.4">
    <molecule id="P07332-1"/>
    <property type="organism name" value="human"/>
</dbReference>
<dbReference type="AGR" id="HGNC:3657"/>
<dbReference type="CTD" id="2242"/>
<dbReference type="DisGeNET" id="2242"/>
<dbReference type="GeneCards" id="FES"/>
<dbReference type="HGNC" id="HGNC:3657">
    <property type="gene designation" value="FES"/>
</dbReference>
<dbReference type="HPA" id="ENSG00000182511">
    <property type="expression patterns" value="Tissue enhanced (bone marrow, lymphoid tissue)"/>
</dbReference>
<dbReference type="MIM" id="190030">
    <property type="type" value="gene"/>
</dbReference>
<dbReference type="neXtProt" id="NX_P07332"/>
<dbReference type="OpenTargets" id="ENSG00000182511"/>
<dbReference type="PharmGKB" id="PA28098"/>
<dbReference type="VEuPathDB" id="HostDB:ENSG00000182511"/>
<dbReference type="eggNOG" id="KOG0194">
    <property type="taxonomic scope" value="Eukaryota"/>
</dbReference>
<dbReference type="GeneTree" id="ENSGT00940000158881"/>
<dbReference type="HOGENOM" id="CLU_005265_0_1_1"/>
<dbReference type="InParanoid" id="P07332"/>
<dbReference type="OMA" id="QNTENMY"/>
<dbReference type="OrthoDB" id="546826at2759"/>
<dbReference type="PAN-GO" id="P07332">
    <property type="GO annotations" value="9 GO annotations based on evolutionary models"/>
</dbReference>
<dbReference type="PhylomeDB" id="P07332"/>
<dbReference type="TreeFam" id="TF315363"/>
<dbReference type="BRENDA" id="2.7.10.2">
    <property type="organism ID" value="2681"/>
</dbReference>
<dbReference type="PathwayCommons" id="P07332"/>
<dbReference type="Reactome" id="R-HSA-1433557">
    <property type="pathway name" value="Signaling by SCF-KIT"/>
</dbReference>
<dbReference type="Reactome" id="R-HSA-399954">
    <property type="pathway name" value="Sema3A PAK dependent Axon repulsion"/>
</dbReference>
<dbReference type="Reactome" id="R-HSA-399955">
    <property type="pathway name" value="SEMA3A-Plexin repulsion signaling by inhibiting Integrin adhesion"/>
</dbReference>
<dbReference type="Reactome" id="R-HSA-399956">
    <property type="pathway name" value="CRMPs in Sema3A signaling"/>
</dbReference>
<dbReference type="SignaLink" id="P07332"/>
<dbReference type="SIGNOR" id="P07332"/>
<dbReference type="BioGRID-ORCS" id="2242">
    <property type="hits" value="15 hits in 1175 CRISPR screens"/>
</dbReference>
<dbReference type="ChiTaRS" id="FES">
    <property type="organism name" value="human"/>
</dbReference>
<dbReference type="EvolutionaryTrace" id="P07332"/>
<dbReference type="GeneWiki" id="Feline_sarcoma_oncogene"/>
<dbReference type="GenomeRNAi" id="2242"/>
<dbReference type="Pharos" id="P07332">
    <property type="development level" value="Tclin"/>
</dbReference>
<dbReference type="PRO" id="PR:P07332"/>
<dbReference type="Proteomes" id="UP000005640">
    <property type="component" value="Chromosome 15"/>
</dbReference>
<dbReference type="RNAct" id="P07332">
    <property type="molecule type" value="protein"/>
</dbReference>
<dbReference type="Bgee" id="ENSG00000182511">
    <property type="expression patterns" value="Expressed in monocyte and 102 other cell types or tissues"/>
</dbReference>
<dbReference type="ExpressionAtlas" id="P07332">
    <property type="expression patterns" value="baseline and differential"/>
</dbReference>
<dbReference type="GO" id="GO:0005737">
    <property type="term" value="C:cytoplasm"/>
    <property type="evidence" value="ECO:0000314"/>
    <property type="project" value="UniProtKB"/>
</dbReference>
<dbReference type="GO" id="GO:0009898">
    <property type="term" value="C:cytoplasmic side of plasma membrane"/>
    <property type="evidence" value="ECO:0000314"/>
    <property type="project" value="UniProtKB"/>
</dbReference>
<dbReference type="GO" id="GO:0031410">
    <property type="term" value="C:cytoplasmic vesicle"/>
    <property type="evidence" value="ECO:0007669"/>
    <property type="project" value="UniProtKB-KW"/>
</dbReference>
<dbReference type="GO" id="GO:0005829">
    <property type="term" value="C:cytosol"/>
    <property type="evidence" value="ECO:0000304"/>
    <property type="project" value="Reactome"/>
</dbReference>
<dbReference type="GO" id="GO:0005925">
    <property type="term" value="C:focal adhesion"/>
    <property type="evidence" value="ECO:0000314"/>
    <property type="project" value="UniProtKB"/>
</dbReference>
<dbReference type="GO" id="GO:0005794">
    <property type="term" value="C:Golgi apparatus"/>
    <property type="evidence" value="ECO:0007669"/>
    <property type="project" value="UniProtKB-SubCell"/>
</dbReference>
<dbReference type="GO" id="GO:0015630">
    <property type="term" value="C:microtubule cytoskeleton"/>
    <property type="evidence" value="ECO:0000314"/>
    <property type="project" value="UniProtKB"/>
</dbReference>
<dbReference type="GO" id="GO:0005886">
    <property type="term" value="C:plasma membrane"/>
    <property type="evidence" value="ECO:0000318"/>
    <property type="project" value="GO_Central"/>
</dbReference>
<dbReference type="GO" id="GO:0005524">
    <property type="term" value="F:ATP binding"/>
    <property type="evidence" value="ECO:0007669"/>
    <property type="project" value="UniProtKB-KW"/>
</dbReference>
<dbReference type="GO" id="GO:0034987">
    <property type="term" value="F:immunoglobulin receptor binding"/>
    <property type="evidence" value="ECO:0000314"/>
    <property type="project" value="UniProtKB"/>
</dbReference>
<dbReference type="GO" id="GO:0008017">
    <property type="term" value="F:microtubule binding"/>
    <property type="evidence" value="ECO:0007669"/>
    <property type="project" value="Ensembl"/>
</dbReference>
<dbReference type="GO" id="GO:0004715">
    <property type="term" value="F:non-membrane spanning protein tyrosine kinase activity"/>
    <property type="evidence" value="ECO:0000314"/>
    <property type="project" value="UniProtKB"/>
</dbReference>
<dbReference type="GO" id="GO:0035091">
    <property type="term" value="F:phosphatidylinositol binding"/>
    <property type="evidence" value="ECO:0000314"/>
    <property type="project" value="UniProtKB"/>
</dbReference>
<dbReference type="GO" id="GO:0004713">
    <property type="term" value="F:protein tyrosine kinase activity"/>
    <property type="evidence" value="ECO:0000314"/>
    <property type="project" value="UniProtKB"/>
</dbReference>
<dbReference type="GO" id="GO:0060038">
    <property type="term" value="P:cardiac muscle cell proliferation"/>
    <property type="evidence" value="ECO:0007669"/>
    <property type="project" value="Ensembl"/>
</dbReference>
<dbReference type="GO" id="GO:0007155">
    <property type="term" value="P:cell adhesion"/>
    <property type="evidence" value="ECO:0000318"/>
    <property type="project" value="GO_Central"/>
</dbReference>
<dbReference type="GO" id="GO:0071305">
    <property type="term" value="P:cellular response to vitamin D"/>
    <property type="evidence" value="ECO:0000315"/>
    <property type="project" value="ARUK-UCL"/>
</dbReference>
<dbReference type="GO" id="GO:0007098">
    <property type="term" value="P:centrosome cycle"/>
    <property type="evidence" value="ECO:0007669"/>
    <property type="project" value="Ensembl"/>
</dbReference>
<dbReference type="GO" id="GO:0006935">
    <property type="term" value="P:chemotaxis"/>
    <property type="evidence" value="ECO:0000318"/>
    <property type="project" value="GO_Central"/>
</dbReference>
<dbReference type="GO" id="GO:0001578">
    <property type="term" value="P:microtubule bundle formation"/>
    <property type="evidence" value="ECO:0007669"/>
    <property type="project" value="Ensembl"/>
</dbReference>
<dbReference type="GO" id="GO:0051450">
    <property type="term" value="P:myoblast proliferation"/>
    <property type="evidence" value="ECO:0007669"/>
    <property type="project" value="Ensembl"/>
</dbReference>
<dbReference type="GO" id="GO:0018108">
    <property type="term" value="P:peptidyl-tyrosine phosphorylation"/>
    <property type="evidence" value="ECO:0000314"/>
    <property type="project" value="UniProtKB"/>
</dbReference>
<dbReference type="GO" id="GO:0031116">
    <property type="term" value="P:positive regulation of microtubule polymerization"/>
    <property type="evidence" value="ECO:0000315"/>
    <property type="project" value="UniProtKB"/>
</dbReference>
<dbReference type="GO" id="GO:0045657">
    <property type="term" value="P:positive regulation of monocyte differentiation"/>
    <property type="evidence" value="ECO:0000315"/>
    <property type="project" value="ARUK-UCL"/>
</dbReference>
<dbReference type="GO" id="GO:0045639">
    <property type="term" value="P:positive regulation of myeloid cell differentiation"/>
    <property type="evidence" value="ECO:0000315"/>
    <property type="project" value="UniProtKB"/>
</dbReference>
<dbReference type="GO" id="GO:0010976">
    <property type="term" value="P:positive regulation of neuron projection development"/>
    <property type="evidence" value="ECO:0000315"/>
    <property type="project" value="UniProtKB"/>
</dbReference>
<dbReference type="GO" id="GO:0046777">
    <property type="term" value="P:protein autophosphorylation"/>
    <property type="evidence" value="ECO:0000314"/>
    <property type="project" value="UniProtKB"/>
</dbReference>
<dbReference type="GO" id="GO:0030155">
    <property type="term" value="P:regulation of cell adhesion"/>
    <property type="evidence" value="ECO:0000315"/>
    <property type="project" value="UniProtKB"/>
</dbReference>
<dbReference type="GO" id="GO:0045595">
    <property type="term" value="P:regulation of cell differentiation"/>
    <property type="evidence" value="ECO:0000315"/>
    <property type="project" value="UniProtKB"/>
</dbReference>
<dbReference type="GO" id="GO:2000145">
    <property type="term" value="P:regulation of cell motility"/>
    <property type="evidence" value="ECO:0000315"/>
    <property type="project" value="UniProtKB"/>
</dbReference>
<dbReference type="GO" id="GO:0042127">
    <property type="term" value="P:regulation of cell population proliferation"/>
    <property type="evidence" value="ECO:0000315"/>
    <property type="project" value="UniProtKB"/>
</dbReference>
<dbReference type="GO" id="GO:0008360">
    <property type="term" value="P:regulation of cell shape"/>
    <property type="evidence" value="ECO:0000315"/>
    <property type="project" value="UniProtKB"/>
</dbReference>
<dbReference type="GO" id="GO:0043304">
    <property type="term" value="P:regulation of mast cell degranulation"/>
    <property type="evidence" value="ECO:0000315"/>
    <property type="project" value="UniProtKB"/>
</dbReference>
<dbReference type="GO" id="GO:0060627">
    <property type="term" value="P:regulation of vesicle-mediated transport"/>
    <property type="evidence" value="ECO:0000304"/>
    <property type="project" value="UniProtKB"/>
</dbReference>
<dbReference type="CDD" id="cd07685">
    <property type="entry name" value="F-BAR_Fes"/>
    <property type="match status" value="1"/>
</dbReference>
<dbReference type="CDD" id="cd05084">
    <property type="entry name" value="PTKc_Fes"/>
    <property type="match status" value="1"/>
</dbReference>
<dbReference type="CDD" id="cd10361">
    <property type="entry name" value="SH2_Fps_family"/>
    <property type="match status" value="1"/>
</dbReference>
<dbReference type="FunFam" id="1.10.287.160:FF:000006">
    <property type="entry name" value="Tyrosine-protein kinase"/>
    <property type="match status" value="1"/>
</dbReference>
<dbReference type="FunFam" id="1.10.510.10:FF:000212">
    <property type="entry name" value="Tyrosine-protein kinase"/>
    <property type="match status" value="1"/>
</dbReference>
<dbReference type="FunFam" id="1.20.1270.60:FF:000030">
    <property type="entry name" value="Tyrosine-protein kinase"/>
    <property type="match status" value="1"/>
</dbReference>
<dbReference type="FunFam" id="3.30.200.20:FF:000089">
    <property type="entry name" value="Tyrosine-protein kinase"/>
    <property type="match status" value="1"/>
</dbReference>
<dbReference type="FunFam" id="3.30.505.10:FF:000020">
    <property type="entry name" value="Tyrosine-protein kinase"/>
    <property type="match status" value="1"/>
</dbReference>
<dbReference type="Gene3D" id="1.20.1270.60">
    <property type="entry name" value="Arfaptin homology (AH) domain/BAR domain"/>
    <property type="match status" value="1"/>
</dbReference>
<dbReference type="Gene3D" id="1.10.287.160">
    <property type="entry name" value="HR1 repeat"/>
    <property type="match status" value="1"/>
</dbReference>
<dbReference type="Gene3D" id="3.30.200.20">
    <property type="entry name" value="Phosphorylase Kinase, domain 1"/>
    <property type="match status" value="1"/>
</dbReference>
<dbReference type="Gene3D" id="3.30.505.10">
    <property type="entry name" value="SH2 domain"/>
    <property type="match status" value="1"/>
</dbReference>
<dbReference type="Gene3D" id="1.10.510.10">
    <property type="entry name" value="Transferase(Phosphotransferase) domain 1"/>
    <property type="match status" value="1"/>
</dbReference>
<dbReference type="InterPro" id="IPR027267">
    <property type="entry name" value="AH/BAR_dom_sf"/>
</dbReference>
<dbReference type="InterPro" id="IPR031160">
    <property type="entry name" value="F_BAR"/>
</dbReference>
<dbReference type="InterPro" id="IPR001060">
    <property type="entry name" value="FCH_dom"/>
</dbReference>
<dbReference type="InterPro" id="IPR035849">
    <property type="entry name" value="Fes/Fps/Fer_SH2"/>
</dbReference>
<dbReference type="InterPro" id="IPR011009">
    <property type="entry name" value="Kinase-like_dom_sf"/>
</dbReference>
<dbReference type="InterPro" id="IPR050198">
    <property type="entry name" value="Non-receptor_tyrosine_kinases"/>
</dbReference>
<dbReference type="InterPro" id="IPR000719">
    <property type="entry name" value="Prot_kinase_dom"/>
</dbReference>
<dbReference type="InterPro" id="IPR017441">
    <property type="entry name" value="Protein_kinase_ATP_BS"/>
</dbReference>
<dbReference type="InterPro" id="IPR001245">
    <property type="entry name" value="Ser-Thr/Tyr_kinase_cat_dom"/>
</dbReference>
<dbReference type="InterPro" id="IPR000980">
    <property type="entry name" value="SH2"/>
</dbReference>
<dbReference type="InterPro" id="IPR036860">
    <property type="entry name" value="SH2_dom_sf"/>
</dbReference>
<dbReference type="InterPro" id="IPR016250">
    <property type="entry name" value="Tyr-prot_kinase_Fes/Fps"/>
</dbReference>
<dbReference type="InterPro" id="IPR008266">
    <property type="entry name" value="Tyr_kinase_AS"/>
</dbReference>
<dbReference type="InterPro" id="IPR020635">
    <property type="entry name" value="Tyr_kinase_cat_dom"/>
</dbReference>
<dbReference type="PANTHER" id="PTHR24418">
    <property type="entry name" value="TYROSINE-PROTEIN KINASE"/>
    <property type="match status" value="1"/>
</dbReference>
<dbReference type="Pfam" id="PF00611">
    <property type="entry name" value="FCH"/>
    <property type="match status" value="1"/>
</dbReference>
<dbReference type="Pfam" id="PF07714">
    <property type="entry name" value="PK_Tyr_Ser-Thr"/>
    <property type="match status" value="1"/>
</dbReference>
<dbReference type="Pfam" id="PF00017">
    <property type="entry name" value="SH2"/>
    <property type="match status" value="1"/>
</dbReference>
<dbReference type="PIRSF" id="PIRSF000632">
    <property type="entry name" value="TyrPK_fps"/>
    <property type="match status" value="1"/>
</dbReference>
<dbReference type="PRINTS" id="PR00401">
    <property type="entry name" value="SH2DOMAIN"/>
</dbReference>
<dbReference type="PRINTS" id="PR00109">
    <property type="entry name" value="TYRKINASE"/>
</dbReference>
<dbReference type="SMART" id="SM00055">
    <property type="entry name" value="FCH"/>
    <property type="match status" value="1"/>
</dbReference>
<dbReference type="SMART" id="SM00252">
    <property type="entry name" value="SH2"/>
    <property type="match status" value="1"/>
</dbReference>
<dbReference type="SMART" id="SM00219">
    <property type="entry name" value="TyrKc"/>
    <property type="match status" value="1"/>
</dbReference>
<dbReference type="SUPFAM" id="SSF103657">
    <property type="entry name" value="BAR/IMD domain-like"/>
    <property type="match status" value="1"/>
</dbReference>
<dbReference type="SUPFAM" id="SSF56112">
    <property type="entry name" value="Protein kinase-like (PK-like)"/>
    <property type="match status" value="1"/>
</dbReference>
<dbReference type="SUPFAM" id="SSF55550">
    <property type="entry name" value="SH2 domain"/>
    <property type="match status" value="1"/>
</dbReference>
<dbReference type="PROSITE" id="PS51741">
    <property type="entry name" value="F_BAR"/>
    <property type="match status" value="1"/>
</dbReference>
<dbReference type="PROSITE" id="PS00107">
    <property type="entry name" value="PROTEIN_KINASE_ATP"/>
    <property type="match status" value="1"/>
</dbReference>
<dbReference type="PROSITE" id="PS50011">
    <property type="entry name" value="PROTEIN_KINASE_DOM"/>
    <property type="match status" value="1"/>
</dbReference>
<dbReference type="PROSITE" id="PS00109">
    <property type="entry name" value="PROTEIN_KINASE_TYR"/>
    <property type="match status" value="1"/>
</dbReference>
<dbReference type="PROSITE" id="PS50001">
    <property type="entry name" value="SH2"/>
    <property type="match status" value="1"/>
</dbReference>
<sequence length="822" mass="93497">MGFSSELCSPQGHGVLQQMQEAELRLLEGMRKWMAQRVKSDREYAGLLHHMSLQDSGGQSRAISPDSPISQSWAEITSQTEGLSRLLRQHAEDLNSGPLSKLSLLIRERQQLRKTYSEQWQQLQQELTKTHSQDIEKLKSQYRALARDSAQAKRKYQEASKDKDRDKAKDKYVRSLWKLFAHHNRYVLGVRAAQLHHQHHHQLLLPGLLRSLQDLHEEMACILKEILQEYLEISSLVQDEVVAIHREMAAAAARIQPEAEYQGFLRQYGSAPDVPPCVTFDESLLEEGEPLEPGELQLNELTVESVQHTLTSVTDELAVATEMVFRRQEMVTQLQQELRNEEENTHPRERVQLLGKRQVLQEALQGLQVALCSQAKLQAQQELLQTKLEHLGPGEPPPVLLLQDDRHSTSSSEQEREGGRTPTLEILKSHISGIFRPKFSLPPPLQLIPEVQKPLHEQLWYHGAIPRAEVAELLVHSGDFLVRESQGKQEYVLSVLWDGLPRHFIIQSLDNLYRLEGEGFPSIPLLIDHLLSTQQPLTKKSGVVLHRAVPKDKWVLNHEDLVLGEQIGRGNFGEVFSGRLRADNTLVAVKSCRETLPPDLKAKFLQEARILKQYSHPNIVRLIGVCTQKQPIYIVMELVQGGDFLTFLRTEGARLRVKTLLQMVGDAAAGMEYLESKCCIHRDLAARNCLVTEKNVLKISDFGMSREEADGVYAASGGLRQVPVKWTAPEALNYGRYSSESDVWSFGILLWETFSLGASPYPNLSNQQTREFVEKGGRLPCPELCPDAVFRLMEQCWAYEPGQRPSFSTIYQELQSIRKRHR</sequence>
<feature type="chain" id="PRO_0000088088" description="Tyrosine-protein kinase Fes/Fps">
    <location>
        <begin position="1"/>
        <end position="822"/>
    </location>
</feature>
<feature type="domain" description="F-BAR" evidence="4">
    <location>
        <begin position="1"/>
        <end position="260"/>
    </location>
</feature>
<feature type="domain" description="SH2" evidence="3">
    <location>
        <begin position="460"/>
        <end position="549"/>
    </location>
</feature>
<feature type="domain" description="Protein kinase" evidence="2">
    <location>
        <begin position="561"/>
        <end position="822"/>
    </location>
</feature>
<feature type="region of interest" description="Important for interaction with membranes containing phosphoinositides">
    <location>
        <begin position="1"/>
        <end position="300"/>
    </location>
</feature>
<feature type="region of interest" description="Disordered" evidence="6">
    <location>
        <begin position="394"/>
        <end position="421"/>
    </location>
</feature>
<feature type="coiled-coil region" evidence="1">
    <location>
        <begin position="125"/>
        <end position="169"/>
    </location>
</feature>
<feature type="coiled-coil region" evidence="1">
    <location>
        <begin position="324"/>
        <end position="368"/>
    </location>
</feature>
<feature type="compositionally biased region" description="Basic and acidic residues" evidence="6">
    <location>
        <begin position="403"/>
        <end position="419"/>
    </location>
</feature>
<feature type="active site" description="Proton acceptor" evidence="2 5">
    <location>
        <position position="683"/>
    </location>
</feature>
<feature type="binding site" evidence="2">
    <location>
        <begin position="567"/>
        <end position="575"/>
    </location>
    <ligand>
        <name>ATP</name>
        <dbReference type="ChEBI" id="CHEBI:30616"/>
    </ligand>
</feature>
<feature type="binding site" evidence="2">
    <location>
        <position position="590"/>
    </location>
    <ligand>
        <name>ATP</name>
        <dbReference type="ChEBI" id="CHEBI:30616"/>
    </ligand>
</feature>
<feature type="modified residue" description="Phosphoserine" evidence="30">
    <location>
        <position position="64"/>
    </location>
</feature>
<feature type="modified residue" description="Phosphoserine" evidence="30">
    <location>
        <position position="67"/>
    </location>
</feature>
<feature type="modified residue" description="Phosphotyrosine" evidence="30">
    <location>
        <position position="261"/>
    </location>
</feature>
<feature type="modified residue" description="Phosphoserine" evidence="31">
    <location>
        <position position="408"/>
    </location>
</feature>
<feature type="modified residue" description="Phosphoserine" evidence="31">
    <location>
        <position position="411"/>
    </location>
</feature>
<feature type="modified residue" description="Phosphothreonine" evidence="21">
    <location>
        <position position="421"/>
    </location>
</feature>
<feature type="modified residue" description="Phosphotyrosine; by autocatalysis" evidence="9 15 16 20 24 30">
    <location>
        <position position="713"/>
    </location>
</feature>
<feature type="modified residue" description="Phosphoserine" evidence="30">
    <location>
        <position position="716"/>
    </location>
</feature>
<feature type="splice variant" id="VSP_041748" description="In isoform 2 and isoform 3." evidence="26 27">
    <location>
        <begin position="72"/>
        <end position="129"/>
    </location>
</feature>
<feature type="splice variant" id="VSP_041749" description="In isoform 2 and isoform 4." evidence="26 27">
    <location>
        <begin position="441"/>
        <end position="510"/>
    </location>
</feature>
<feature type="sequence variant" id="VAR_041697" description="In dbSNP:rs56041861." evidence="13">
    <original>R</original>
    <variation>C</variation>
    <location>
        <position position="85"/>
    </location>
</feature>
<feature type="sequence variant" id="VAR_041698" description="In dbSNP:rs34573430." evidence="13">
    <original>R</original>
    <variation>Q</variation>
    <location>
        <position position="246"/>
    </location>
</feature>
<feature type="sequence variant" id="VAR_041699" description="In dbSNP:rs56296062." evidence="13">
    <original>M</original>
    <variation>V</variation>
    <location>
        <position position="323"/>
    </location>
</feature>
<feature type="mutagenesis site" description="Reduced binding to membranes containing phosphoinositides." evidence="17">
    <original>RK</original>
    <variation>EE</variation>
    <location>
        <begin position="113"/>
        <end position="114"/>
    </location>
</feature>
<feature type="mutagenesis site" description="Reduced binding to membranes containing phosphoinositides." evidence="17">
    <original>RK</original>
    <variation>QQ</variation>
    <location>
        <begin position="113"/>
        <end position="114"/>
    </location>
</feature>
<feature type="mutagenesis site" description="Constitutively activated kinase that can act as oncogene. Promotes myeloid cell survival and proliferation." evidence="7 9">
    <original>L</original>
    <variation>P</variation>
    <location>
        <position position="145"/>
    </location>
</feature>
<feature type="mutagenesis site" description="Abolishes autophosphorylation." evidence="7">
    <original>L</original>
    <variation>P</variation>
    <location>
        <position position="334"/>
    </location>
</feature>
<feature type="mutagenesis site" description="Abolishes kinase activity." evidence="16">
    <original>G</original>
    <variation>V</variation>
    <location>
        <position position="463"/>
    </location>
</feature>
<feature type="mutagenesis site" description="Abolishes pTyr binding. Abolishes association with microtubules. Abolishes autophosphorylation. Reduced kinase activity." evidence="9 16">
    <original>R</original>
    <variation>M</variation>
    <location>
        <position position="483"/>
    </location>
</feature>
<feature type="mutagenesis site" description="Abolishes kinase activity. Fails to inhibit proliferation of melanoma cells." evidence="9 23">
    <original>K</original>
    <variation>E</variation>
    <location>
        <position position="590"/>
    </location>
</feature>
<feature type="mutagenesis site" description="Reduced autophosphorylation and strongly reduced kinase activity." evidence="10 11">
    <original>M</original>
    <variation>V</variation>
    <location>
        <position position="704"/>
    </location>
</feature>
<feature type="mutagenesis site" description="Negligible effect on autophosphorylation and kinase activity." evidence="10 11">
    <original>R</original>
    <variation>Q</variation>
    <location>
        <position position="706"/>
    </location>
</feature>
<feature type="mutagenesis site" description="Reduces kinase activity by over 90%." evidence="24">
    <original>Y</original>
    <variation>F</variation>
    <location>
        <position position="713"/>
    </location>
</feature>
<feature type="mutagenesis site" description="Strongly reduced autophosphorylation and kinase activity." evidence="10 11">
    <original>V</original>
    <variation>M</variation>
    <location>
        <position position="743"/>
    </location>
</feature>
<feature type="mutagenesis site" description="Reduced autophosphorylation and strongly reduced kinase activity." evidence="10 11">
    <original>S</original>
    <variation>F</variation>
    <location>
        <position position="759"/>
    </location>
</feature>
<feature type="sequence conflict" description="In Ref. 1; CAA36438 and 3; AAS82866/AAS82869/AAS82868." evidence="28" ref="1 3">
    <original>L</original>
    <variation>S</variation>
    <location>
        <position position="719"/>
    </location>
</feature>
<feature type="helix" evidence="34">
    <location>
        <begin position="3"/>
        <end position="6"/>
    </location>
</feature>
<feature type="helix" evidence="34">
    <location>
        <begin position="10"/>
        <end position="51"/>
    </location>
</feature>
<feature type="helix" evidence="34">
    <location>
        <begin position="68"/>
        <end position="96"/>
    </location>
</feature>
<feature type="helix" evidence="34">
    <location>
        <begin position="98"/>
        <end position="131"/>
    </location>
</feature>
<feature type="helix" evidence="34">
    <location>
        <begin position="133"/>
        <end position="154"/>
    </location>
</feature>
<feature type="helix" evidence="34">
    <location>
        <begin position="167"/>
        <end position="202"/>
    </location>
</feature>
<feature type="helix" evidence="34">
    <location>
        <begin position="204"/>
        <end position="234"/>
    </location>
</feature>
<feature type="strand" evidence="34">
    <location>
        <begin position="236"/>
        <end position="238"/>
    </location>
</feature>
<feature type="helix" evidence="34">
    <location>
        <begin position="239"/>
        <end position="254"/>
    </location>
</feature>
<feature type="helix" evidence="34">
    <location>
        <begin position="257"/>
        <end position="259"/>
    </location>
</feature>
<feature type="helix" evidence="34">
    <location>
        <begin position="262"/>
        <end position="268"/>
    </location>
</feature>
<feature type="turn" evidence="34">
    <location>
        <begin position="300"/>
        <end position="302"/>
    </location>
</feature>
<feature type="helix" evidence="34">
    <location>
        <begin position="303"/>
        <end position="344"/>
    </location>
</feature>
<feature type="helix" evidence="34">
    <location>
        <begin position="350"/>
        <end position="353"/>
    </location>
</feature>
<feature type="helix" evidence="34">
    <location>
        <begin position="354"/>
        <end position="389"/>
    </location>
</feature>
<feature type="turn" evidence="34">
    <location>
        <begin position="390"/>
        <end position="393"/>
    </location>
</feature>
<feature type="helix" evidence="33">
    <location>
        <begin position="450"/>
        <end position="452"/>
    </location>
</feature>
<feature type="helix" evidence="36">
    <location>
        <begin position="455"/>
        <end position="457"/>
    </location>
</feature>
<feature type="strand" evidence="32">
    <location>
        <begin position="461"/>
        <end position="464"/>
    </location>
</feature>
<feature type="helix" evidence="36">
    <location>
        <begin position="467"/>
        <end position="473"/>
    </location>
</feature>
<feature type="strand" evidence="36">
    <location>
        <begin position="479"/>
        <end position="483"/>
    </location>
</feature>
<feature type="strand" evidence="36">
    <location>
        <begin position="486"/>
        <end position="490"/>
    </location>
</feature>
<feature type="strand" evidence="36">
    <location>
        <begin position="492"/>
        <end position="497"/>
    </location>
</feature>
<feature type="strand" evidence="36">
    <location>
        <begin position="500"/>
        <end position="505"/>
    </location>
</feature>
<feature type="strand" evidence="36">
    <location>
        <begin position="507"/>
        <end position="509"/>
    </location>
</feature>
<feature type="strand" evidence="36">
    <location>
        <begin position="512"/>
        <end position="517"/>
    </location>
</feature>
<feature type="strand" evidence="36">
    <location>
        <begin position="520"/>
        <end position="522"/>
    </location>
</feature>
<feature type="helix" evidence="36">
    <location>
        <begin position="523"/>
        <end position="533"/>
    </location>
</feature>
<feature type="turn" evidence="36">
    <location>
        <begin position="539"/>
        <end position="541"/>
    </location>
</feature>
<feature type="helix" evidence="33">
    <location>
        <begin position="558"/>
        <end position="560"/>
    </location>
</feature>
<feature type="strand" evidence="33">
    <location>
        <begin position="561"/>
        <end position="570"/>
    </location>
</feature>
<feature type="strand" evidence="33">
    <location>
        <begin position="573"/>
        <end position="580"/>
    </location>
</feature>
<feature type="turn" evidence="33">
    <location>
        <begin position="581"/>
        <end position="583"/>
    </location>
</feature>
<feature type="strand" evidence="33">
    <location>
        <begin position="586"/>
        <end position="591"/>
    </location>
</feature>
<feature type="helix" evidence="33">
    <location>
        <begin position="598"/>
        <end position="601"/>
    </location>
</feature>
<feature type="helix" evidence="33">
    <location>
        <begin position="602"/>
        <end position="605"/>
    </location>
</feature>
<feature type="helix" evidence="33">
    <location>
        <begin position="606"/>
        <end position="611"/>
    </location>
</feature>
<feature type="strand" evidence="33">
    <location>
        <begin position="622"/>
        <end position="626"/>
    </location>
</feature>
<feature type="strand" evidence="33">
    <location>
        <begin position="628"/>
        <end position="631"/>
    </location>
</feature>
<feature type="strand" evidence="33">
    <location>
        <begin position="633"/>
        <end position="637"/>
    </location>
</feature>
<feature type="helix" evidence="33">
    <location>
        <begin position="644"/>
        <end position="651"/>
    </location>
</feature>
<feature type="helix" evidence="33">
    <location>
        <begin position="652"/>
        <end position="654"/>
    </location>
</feature>
<feature type="helix" evidence="33">
    <location>
        <begin position="657"/>
        <end position="676"/>
    </location>
</feature>
<feature type="helix" evidence="33">
    <location>
        <begin position="686"/>
        <end position="688"/>
    </location>
</feature>
<feature type="strand" evidence="33">
    <location>
        <begin position="689"/>
        <end position="691"/>
    </location>
</feature>
<feature type="strand" evidence="33">
    <location>
        <begin position="697"/>
        <end position="699"/>
    </location>
</feature>
<feature type="helix" evidence="33">
    <location>
        <begin position="702"/>
        <end position="704"/>
    </location>
</feature>
<feature type="strand" evidence="33">
    <location>
        <begin position="711"/>
        <end position="714"/>
    </location>
</feature>
<feature type="strand" evidence="33">
    <location>
        <begin position="720"/>
        <end position="723"/>
    </location>
</feature>
<feature type="helix" evidence="33">
    <location>
        <begin position="724"/>
        <end position="726"/>
    </location>
</feature>
<feature type="helix" evidence="33">
    <location>
        <begin position="729"/>
        <end position="734"/>
    </location>
</feature>
<feature type="strand" evidence="33">
    <location>
        <begin position="736"/>
        <end position="738"/>
    </location>
</feature>
<feature type="helix" evidence="33">
    <location>
        <begin position="739"/>
        <end position="754"/>
    </location>
</feature>
<feature type="turn" evidence="35">
    <location>
        <begin position="755"/>
        <end position="757"/>
    </location>
</feature>
<feature type="helix" evidence="33">
    <location>
        <begin position="766"/>
        <end position="774"/>
    </location>
</feature>
<feature type="helix" evidence="33">
    <location>
        <begin position="787"/>
        <end position="796"/>
    </location>
</feature>
<feature type="helix" evidence="33">
    <location>
        <begin position="801"/>
        <end position="803"/>
    </location>
</feature>
<feature type="helix" evidence="33">
    <location>
        <begin position="807"/>
        <end position="820"/>
    </location>
</feature>
<accession>P07332</accession>
<accession>B2R6E6</accession>
<accession>B4DUD0</accession>
<accession>E9PC94</accession>
<accession>E9PC95</accession>
<accession>Q2VXS7</accession>
<accession>Q2VXS8</accession>
<accession>Q2VXT0</accession>
<accession>Q6GTU5</accession>
<keyword id="KW-0002">3D-structure</keyword>
<keyword id="KW-0025">Alternative splicing</keyword>
<keyword id="KW-0067">ATP-binding</keyword>
<keyword id="KW-0965">Cell junction</keyword>
<keyword id="KW-1003">Cell membrane</keyword>
<keyword id="KW-0175">Coiled coil</keyword>
<keyword id="KW-0963">Cytoplasm</keyword>
<keyword id="KW-0968">Cytoplasmic vesicle</keyword>
<keyword id="KW-0206">Cytoskeleton</keyword>
<keyword id="KW-0333">Golgi apparatus</keyword>
<keyword id="KW-0418">Kinase</keyword>
<keyword id="KW-0446">Lipid-binding</keyword>
<keyword id="KW-0472">Membrane</keyword>
<keyword id="KW-0547">Nucleotide-binding</keyword>
<keyword id="KW-0597">Phosphoprotein</keyword>
<keyword id="KW-1267">Proteomics identification</keyword>
<keyword id="KW-0656">Proto-oncogene</keyword>
<keyword id="KW-1185">Reference proteome</keyword>
<keyword id="KW-0727">SH2 domain</keyword>
<keyword id="KW-0808">Transferase</keyword>
<keyword id="KW-0043">Tumor suppressor</keyword>
<keyword id="KW-0829">Tyrosine-protein kinase</keyword>